<comment type="function">
    <text evidence="1">Catalyzes the transfer of a phosphate group to glutamate to form L-glutamate 5-phosphate.</text>
</comment>
<comment type="catalytic activity">
    <reaction evidence="1">
        <text>L-glutamate + ATP = L-glutamyl 5-phosphate + ADP</text>
        <dbReference type="Rhea" id="RHEA:14877"/>
        <dbReference type="ChEBI" id="CHEBI:29985"/>
        <dbReference type="ChEBI" id="CHEBI:30616"/>
        <dbReference type="ChEBI" id="CHEBI:58274"/>
        <dbReference type="ChEBI" id="CHEBI:456216"/>
        <dbReference type="EC" id="2.7.2.11"/>
    </reaction>
</comment>
<comment type="pathway">
    <text evidence="1">Amino-acid biosynthesis; L-proline biosynthesis; L-glutamate 5-semialdehyde from L-glutamate: step 1/2.</text>
</comment>
<comment type="subcellular location">
    <subcellularLocation>
        <location evidence="1">Cytoplasm</location>
    </subcellularLocation>
</comment>
<comment type="similarity">
    <text evidence="1">Belongs to the glutamate 5-kinase family.</text>
</comment>
<comment type="sequence caution" evidence="2">
    <conflict type="erroneous initiation">
        <sequence resource="EMBL-CDS" id="BAB74802"/>
    </conflict>
</comment>
<reference key="1">
    <citation type="journal article" date="2001" name="DNA Res.">
        <title>Complete genomic sequence of the filamentous nitrogen-fixing cyanobacterium Anabaena sp. strain PCC 7120.</title>
        <authorList>
            <person name="Kaneko T."/>
            <person name="Nakamura Y."/>
            <person name="Wolk C.P."/>
            <person name="Kuritz T."/>
            <person name="Sasamoto S."/>
            <person name="Watanabe A."/>
            <person name="Iriguchi M."/>
            <person name="Ishikawa A."/>
            <person name="Kawashima K."/>
            <person name="Kimura T."/>
            <person name="Kishida Y."/>
            <person name="Kohara M."/>
            <person name="Matsumoto M."/>
            <person name="Matsuno A."/>
            <person name="Muraki A."/>
            <person name="Nakazaki N."/>
            <person name="Shimpo S."/>
            <person name="Sugimoto M."/>
            <person name="Takazawa M."/>
            <person name="Yamada M."/>
            <person name="Yasuda M."/>
            <person name="Tabata S."/>
        </authorList>
    </citation>
    <scope>NUCLEOTIDE SEQUENCE [LARGE SCALE GENOMIC DNA]</scope>
    <source>
        <strain>PCC 7120 / SAG 25.82 / UTEX 2576</strain>
    </source>
</reference>
<proteinExistence type="inferred from homology"/>
<protein>
    <recommendedName>
        <fullName evidence="1">Glutamate 5-kinase</fullName>
        <ecNumber evidence="1">2.7.2.11</ecNumber>
    </recommendedName>
    <alternativeName>
        <fullName evidence="1">Gamma-glutamyl kinase</fullName>
        <shortName evidence="1">GK</shortName>
    </alternativeName>
</protein>
<name>PROB_NOSS1</name>
<sequence>MNFELERSDLTKTIVVKIGTSSLTQPETGQLALSTIATLAETLSHLRQQGNRVILVSSGAVGVGCARLGLTERPKAIALKQAVAAVGQGRLMRVYDDLFTTLQQPIAQVLLTRSDLVQRSRYLNVYNTFRELLALGVIPVVNENDTVAVDELKFGDNDTLSALVASLVEADWLFLLTDVDRLYSADPRSVPDARPISLVTSIKELADLQVQTGSQGSQWGTGGMMTKISAARIAIAAGVRTVITQGRYPRNIEKIIQGELIGTHFQPQPEPTSARKRWIAYGLVPVGKLYLDSGAIAAIVKAGKSLLPAGVKTVAGEFEPQDAVQLCDPQGNEIARGLVNYSSNDLQKICGRHSKEIPTILGYVGAETVIHRDNLVLT</sequence>
<organism>
    <name type="scientific">Nostoc sp. (strain PCC 7120 / SAG 25.82 / UTEX 2576)</name>
    <dbReference type="NCBI Taxonomy" id="103690"/>
    <lineage>
        <taxon>Bacteria</taxon>
        <taxon>Bacillati</taxon>
        <taxon>Cyanobacteriota</taxon>
        <taxon>Cyanophyceae</taxon>
        <taxon>Nostocales</taxon>
        <taxon>Nostocaceae</taxon>
        <taxon>Nostoc</taxon>
    </lineage>
</organism>
<keyword id="KW-0028">Amino-acid biosynthesis</keyword>
<keyword id="KW-0067">ATP-binding</keyword>
<keyword id="KW-0963">Cytoplasm</keyword>
<keyword id="KW-0418">Kinase</keyword>
<keyword id="KW-0547">Nucleotide-binding</keyword>
<keyword id="KW-0641">Proline biosynthesis</keyword>
<keyword id="KW-1185">Reference proteome</keyword>
<keyword id="KW-0808">Transferase</keyword>
<feature type="chain" id="PRO_0000109629" description="Glutamate 5-kinase">
    <location>
        <begin position="1"/>
        <end position="378"/>
    </location>
</feature>
<feature type="domain" description="PUA" evidence="1">
    <location>
        <begin position="286"/>
        <end position="364"/>
    </location>
</feature>
<feature type="binding site" evidence="1">
    <location>
        <position position="17"/>
    </location>
    <ligand>
        <name>ATP</name>
        <dbReference type="ChEBI" id="CHEBI:30616"/>
    </ligand>
</feature>
<feature type="binding site" evidence="1">
    <location>
        <position position="58"/>
    </location>
    <ligand>
        <name>substrate</name>
    </ligand>
</feature>
<feature type="binding site" evidence="1">
    <location>
        <position position="145"/>
    </location>
    <ligand>
        <name>substrate</name>
    </ligand>
</feature>
<feature type="binding site" evidence="1">
    <location>
        <position position="157"/>
    </location>
    <ligand>
        <name>substrate</name>
    </ligand>
</feature>
<feature type="binding site" evidence="1">
    <location>
        <begin position="177"/>
        <end position="178"/>
    </location>
    <ligand>
        <name>ATP</name>
        <dbReference type="ChEBI" id="CHEBI:30616"/>
    </ligand>
</feature>
<feature type="binding site" evidence="1">
    <location>
        <begin position="221"/>
        <end position="227"/>
    </location>
    <ligand>
        <name>ATP</name>
        <dbReference type="ChEBI" id="CHEBI:30616"/>
    </ligand>
</feature>
<evidence type="ECO:0000255" key="1">
    <source>
        <dbReference type="HAMAP-Rule" id="MF_00456"/>
    </source>
</evidence>
<evidence type="ECO:0000305" key="2"/>
<dbReference type="EC" id="2.7.2.11" evidence="1"/>
<dbReference type="EMBL" id="BA000019">
    <property type="protein sequence ID" value="BAB74802.1"/>
    <property type="status" value="ALT_INIT"/>
    <property type="molecule type" value="Genomic_DNA"/>
</dbReference>
<dbReference type="PIR" id="AH2193">
    <property type="entry name" value="AH2193"/>
</dbReference>
<dbReference type="SMR" id="Q8YSI2"/>
<dbReference type="STRING" id="103690.gene:10495139"/>
<dbReference type="KEGG" id="ana:alr3103"/>
<dbReference type="eggNOG" id="COG0263">
    <property type="taxonomic scope" value="Bacteria"/>
</dbReference>
<dbReference type="UniPathway" id="UPA00098">
    <property type="reaction ID" value="UER00359"/>
</dbReference>
<dbReference type="Proteomes" id="UP000002483">
    <property type="component" value="Chromosome"/>
</dbReference>
<dbReference type="GO" id="GO:0005829">
    <property type="term" value="C:cytosol"/>
    <property type="evidence" value="ECO:0007669"/>
    <property type="project" value="TreeGrafter"/>
</dbReference>
<dbReference type="GO" id="GO:0005524">
    <property type="term" value="F:ATP binding"/>
    <property type="evidence" value="ECO:0007669"/>
    <property type="project" value="UniProtKB-KW"/>
</dbReference>
<dbReference type="GO" id="GO:0004349">
    <property type="term" value="F:glutamate 5-kinase activity"/>
    <property type="evidence" value="ECO:0007669"/>
    <property type="project" value="UniProtKB-UniRule"/>
</dbReference>
<dbReference type="GO" id="GO:0003723">
    <property type="term" value="F:RNA binding"/>
    <property type="evidence" value="ECO:0007669"/>
    <property type="project" value="InterPro"/>
</dbReference>
<dbReference type="GO" id="GO:0055129">
    <property type="term" value="P:L-proline biosynthetic process"/>
    <property type="evidence" value="ECO:0007669"/>
    <property type="project" value="UniProtKB-UniRule"/>
</dbReference>
<dbReference type="CDD" id="cd04242">
    <property type="entry name" value="AAK_G5K_ProB"/>
    <property type="match status" value="1"/>
</dbReference>
<dbReference type="CDD" id="cd21157">
    <property type="entry name" value="PUA_G5K"/>
    <property type="match status" value="1"/>
</dbReference>
<dbReference type="FunFam" id="2.30.130.10:FF:000007">
    <property type="entry name" value="Glutamate 5-kinase"/>
    <property type="match status" value="1"/>
</dbReference>
<dbReference type="FunFam" id="3.40.1160.10:FF:000018">
    <property type="entry name" value="Glutamate 5-kinase"/>
    <property type="match status" value="1"/>
</dbReference>
<dbReference type="Gene3D" id="3.40.1160.10">
    <property type="entry name" value="Acetylglutamate kinase-like"/>
    <property type="match status" value="2"/>
</dbReference>
<dbReference type="Gene3D" id="2.30.130.10">
    <property type="entry name" value="PUA domain"/>
    <property type="match status" value="1"/>
</dbReference>
<dbReference type="HAMAP" id="MF_00456">
    <property type="entry name" value="ProB"/>
    <property type="match status" value="1"/>
</dbReference>
<dbReference type="InterPro" id="IPR036393">
    <property type="entry name" value="AceGlu_kinase-like_sf"/>
</dbReference>
<dbReference type="InterPro" id="IPR001048">
    <property type="entry name" value="Asp/Glu/Uridylate_kinase"/>
</dbReference>
<dbReference type="InterPro" id="IPR041739">
    <property type="entry name" value="G5K_ProB"/>
</dbReference>
<dbReference type="InterPro" id="IPR001057">
    <property type="entry name" value="Glu/AcGlu_kinase"/>
</dbReference>
<dbReference type="InterPro" id="IPR011529">
    <property type="entry name" value="Glu_5kinase"/>
</dbReference>
<dbReference type="InterPro" id="IPR005715">
    <property type="entry name" value="Glu_5kinase/COase_Synthase"/>
</dbReference>
<dbReference type="InterPro" id="IPR019797">
    <property type="entry name" value="Glutamate_5-kinase_CS"/>
</dbReference>
<dbReference type="InterPro" id="IPR002478">
    <property type="entry name" value="PUA"/>
</dbReference>
<dbReference type="InterPro" id="IPR015947">
    <property type="entry name" value="PUA-like_sf"/>
</dbReference>
<dbReference type="InterPro" id="IPR036974">
    <property type="entry name" value="PUA_sf"/>
</dbReference>
<dbReference type="NCBIfam" id="TIGR01027">
    <property type="entry name" value="proB"/>
    <property type="match status" value="1"/>
</dbReference>
<dbReference type="PANTHER" id="PTHR43654">
    <property type="entry name" value="GLUTAMATE 5-KINASE"/>
    <property type="match status" value="1"/>
</dbReference>
<dbReference type="PANTHER" id="PTHR43654:SF3">
    <property type="entry name" value="GLUTAMATE 5-KINASE"/>
    <property type="match status" value="1"/>
</dbReference>
<dbReference type="Pfam" id="PF00696">
    <property type="entry name" value="AA_kinase"/>
    <property type="match status" value="1"/>
</dbReference>
<dbReference type="Pfam" id="PF01472">
    <property type="entry name" value="PUA"/>
    <property type="match status" value="1"/>
</dbReference>
<dbReference type="PIRSF" id="PIRSF000729">
    <property type="entry name" value="GK"/>
    <property type="match status" value="1"/>
</dbReference>
<dbReference type="PRINTS" id="PR00474">
    <property type="entry name" value="GLU5KINASE"/>
</dbReference>
<dbReference type="SMART" id="SM00359">
    <property type="entry name" value="PUA"/>
    <property type="match status" value="1"/>
</dbReference>
<dbReference type="SUPFAM" id="SSF53633">
    <property type="entry name" value="Carbamate kinase-like"/>
    <property type="match status" value="1"/>
</dbReference>
<dbReference type="SUPFAM" id="SSF88697">
    <property type="entry name" value="PUA domain-like"/>
    <property type="match status" value="1"/>
</dbReference>
<dbReference type="PROSITE" id="PS00902">
    <property type="entry name" value="GLUTAMATE_5_KINASE"/>
    <property type="match status" value="1"/>
</dbReference>
<dbReference type="PROSITE" id="PS50890">
    <property type="entry name" value="PUA"/>
    <property type="match status" value="1"/>
</dbReference>
<gene>
    <name evidence="1" type="primary">proB</name>
    <name type="ordered locus">alr3103</name>
</gene>
<accession>Q8YSI2</accession>